<accession>Q82XA1</accession>
<evidence type="ECO:0000255" key="1">
    <source>
        <dbReference type="HAMAP-Rule" id="MF_00379"/>
    </source>
</evidence>
<dbReference type="EC" id="3.6.-.-" evidence="1"/>
<dbReference type="EMBL" id="AL954747">
    <property type="protein sequence ID" value="CAD84297.1"/>
    <property type="molecule type" value="Genomic_DNA"/>
</dbReference>
<dbReference type="RefSeq" id="WP_011111021.1">
    <property type="nucleotide sequence ID" value="NC_004757.1"/>
</dbReference>
<dbReference type="SMR" id="Q82XA1"/>
<dbReference type="STRING" id="228410.NE0386"/>
<dbReference type="GeneID" id="87103594"/>
<dbReference type="KEGG" id="neu:NE0386"/>
<dbReference type="eggNOG" id="COG0486">
    <property type="taxonomic scope" value="Bacteria"/>
</dbReference>
<dbReference type="HOGENOM" id="CLU_019624_4_1_4"/>
<dbReference type="OrthoDB" id="9805918at2"/>
<dbReference type="PhylomeDB" id="Q82XA1"/>
<dbReference type="Proteomes" id="UP000001416">
    <property type="component" value="Chromosome"/>
</dbReference>
<dbReference type="GO" id="GO:0005829">
    <property type="term" value="C:cytosol"/>
    <property type="evidence" value="ECO:0007669"/>
    <property type="project" value="TreeGrafter"/>
</dbReference>
<dbReference type="GO" id="GO:0005525">
    <property type="term" value="F:GTP binding"/>
    <property type="evidence" value="ECO:0007669"/>
    <property type="project" value="UniProtKB-UniRule"/>
</dbReference>
<dbReference type="GO" id="GO:0003924">
    <property type="term" value="F:GTPase activity"/>
    <property type="evidence" value="ECO:0007669"/>
    <property type="project" value="UniProtKB-UniRule"/>
</dbReference>
<dbReference type="GO" id="GO:0046872">
    <property type="term" value="F:metal ion binding"/>
    <property type="evidence" value="ECO:0007669"/>
    <property type="project" value="UniProtKB-KW"/>
</dbReference>
<dbReference type="GO" id="GO:0030488">
    <property type="term" value="P:tRNA methylation"/>
    <property type="evidence" value="ECO:0007669"/>
    <property type="project" value="TreeGrafter"/>
</dbReference>
<dbReference type="GO" id="GO:0002098">
    <property type="term" value="P:tRNA wobble uridine modification"/>
    <property type="evidence" value="ECO:0007669"/>
    <property type="project" value="TreeGrafter"/>
</dbReference>
<dbReference type="CDD" id="cd04164">
    <property type="entry name" value="trmE"/>
    <property type="match status" value="1"/>
</dbReference>
<dbReference type="CDD" id="cd14858">
    <property type="entry name" value="TrmE_N"/>
    <property type="match status" value="1"/>
</dbReference>
<dbReference type="FunFam" id="3.40.50.300:FF:001376">
    <property type="entry name" value="tRNA modification GTPase MnmE"/>
    <property type="match status" value="1"/>
</dbReference>
<dbReference type="Gene3D" id="3.40.50.300">
    <property type="entry name" value="P-loop containing nucleotide triphosphate hydrolases"/>
    <property type="match status" value="1"/>
</dbReference>
<dbReference type="Gene3D" id="3.30.1360.120">
    <property type="entry name" value="Probable tRNA modification gtpase trme, domain 1"/>
    <property type="match status" value="1"/>
</dbReference>
<dbReference type="Gene3D" id="1.20.120.430">
    <property type="entry name" value="tRNA modification GTPase MnmE domain 2"/>
    <property type="match status" value="1"/>
</dbReference>
<dbReference type="HAMAP" id="MF_00379">
    <property type="entry name" value="GTPase_MnmE"/>
    <property type="match status" value="1"/>
</dbReference>
<dbReference type="InterPro" id="IPR031168">
    <property type="entry name" value="G_TrmE"/>
</dbReference>
<dbReference type="InterPro" id="IPR006073">
    <property type="entry name" value="GTP-bd"/>
</dbReference>
<dbReference type="InterPro" id="IPR018948">
    <property type="entry name" value="GTP-bd_TrmE_N"/>
</dbReference>
<dbReference type="InterPro" id="IPR004520">
    <property type="entry name" value="GTPase_MnmE"/>
</dbReference>
<dbReference type="InterPro" id="IPR027368">
    <property type="entry name" value="MnmE_dom2"/>
</dbReference>
<dbReference type="InterPro" id="IPR025867">
    <property type="entry name" value="MnmE_helical"/>
</dbReference>
<dbReference type="InterPro" id="IPR027417">
    <property type="entry name" value="P-loop_NTPase"/>
</dbReference>
<dbReference type="InterPro" id="IPR005225">
    <property type="entry name" value="Small_GTP-bd"/>
</dbReference>
<dbReference type="InterPro" id="IPR027266">
    <property type="entry name" value="TrmE/GcvT_dom1"/>
</dbReference>
<dbReference type="NCBIfam" id="TIGR00450">
    <property type="entry name" value="mnmE_trmE_thdF"/>
    <property type="match status" value="1"/>
</dbReference>
<dbReference type="NCBIfam" id="NF003661">
    <property type="entry name" value="PRK05291.1-3"/>
    <property type="match status" value="1"/>
</dbReference>
<dbReference type="NCBIfam" id="TIGR00231">
    <property type="entry name" value="small_GTP"/>
    <property type="match status" value="1"/>
</dbReference>
<dbReference type="PANTHER" id="PTHR42714">
    <property type="entry name" value="TRNA MODIFICATION GTPASE GTPBP3"/>
    <property type="match status" value="1"/>
</dbReference>
<dbReference type="PANTHER" id="PTHR42714:SF2">
    <property type="entry name" value="TRNA MODIFICATION GTPASE GTPBP3, MITOCHONDRIAL"/>
    <property type="match status" value="1"/>
</dbReference>
<dbReference type="Pfam" id="PF01926">
    <property type="entry name" value="MMR_HSR1"/>
    <property type="match status" value="1"/>
</dbReference>
<dbReference type="Pfam" id="PF12631">
    <property type="entry name" value="MnmE_helical"/>
    <property type="match status" value="1"/>
</dbReference>
<dbReference type="Pfam" id="PF10396">
    <property type="entry name" value="TrmE_N"/>
    <property type="match status" value="1"/>
</dbReference>
<dbReference type="PRINTS" id="PR00449">
    <property type="entry name" value="RASTRNSFRMNG"/>
</dbReference>
<dbReference type="SUPFAM" id="SSF52540">
    <property type="entry name" value="P-loop containing nucleoside triphosphate hydrolases"/>
    <property type="match status" value="1"/>
</dbReference>
<dbReference type="PROSITE" id="PS51709">
    <property type="entry name" value="G_TRME"/>
    <property type="match status" value="1"/>
</dbReference>
<protein>
    <recommendedName>
        <fullName evidence="1">tRNA modification GTPase MnmE</fullName>
        <ecNumber evidence="1">3.6.-.-</ecNumber>
    </recommendedName>
</protein>
<organism>
    <name type="scientific">Nitrosomonas europaea (strain ATCC 19718 / CIP 103999 / KCTC 2705 / NBRC 14298)</name>
    <dbReference type="NCBI Taxonomy" id="228410"/>
    <lineage>
        <taxon>Bacteria</taxon>
        <taxon>Pseudomonadati</taxon>
        <taxon>Pseudomonadota</taxon>
        <taxon>Betaproteobacteria</taxon>
        <taxon>Nitrosomonadales</taxon>
        <taxon>Nitrosomonadaceae</taxon>
        <taxon>Nitrosomonas</taxon>
    </lineage>
</organism>
<keyword id="KW-0963">Cytoplasm</keyword>
<keyword id="KW-0342">GTP-binding</keyword>
<keyword id="KW-0378">Hydrolase</keyword>
<keyword id="KW-0460">Magnesium</keyword>
<keyword id="KW-0479">Metal-binding</keyword>
<keyword id="KW-0547">Nucleotide-binding</keyword>
<keyword id="KW-0630">Potassium</keyword>
<keyword id="KW-1185">Reference proteome</keyword>
<keyword id="KW-0819">tRNA processing</keyword>
<reference key="1">
    <citation type="journal article" date="2003" name="J. Bacteriol.">
        <title>Complete genome sequence of the ammonia-oxidizing bacterium and obligate chemolithoautotroph Nitrosomonas europaea.</title>
        <authorList>
            <person name="Chain P."/>
            <person name="Lamerdin J.E."/>
            <person name="Larimer F.W."/>
            <person name="Regala W."/>
            <person name="Lao V."/>
            <person name="Land M.L."/>
            <person name="Hauser L."/>
            <person name="Hooper A.B."/>
            <person name="Klotz M.G."/>
            <person name="Norton J."/>
            <person name="Sayavedra-Soto L.A."/>
            <person name="Arciero D.M."/>
            <person name="Hommes N.G."/>
            <person name="Whittaker M.M."/>
            <person name="Arp D.J."/>
        </authorList>
    </citation>
    <scope>NUCLEOTIDE SEQUENCE [LARGE SCALE GENOMIC DNA]</scope>
    <source>
        <strain>ATCC 19718 / CIP 103999 / KCTC 2705 / NBRC 14298</strain>
    </source>
</reference>
<comment type="function">
    <text evidence="1">Exhibits a very high intrinsic GTPase hydrolysis rate. Involved in the addition of a carboxymethylaminomethyl (cmnm) group at the wobble position (U34) of certain tRNAs, forming tRNA-cmnm(5)s(2)U34.</text>
</comment>
<comment type="cofactor">
    <cofactor evidence="1">
        <name>K(+)</name>
        <dbReference type="ChEBI" id="CHEBI:29103"/>
    </cofactor>
    <text evidence="1">Binds 1 potassium ion per subunit.</text>
</comment>
<comment type="subunit">
    <text evidence="1">Homodimer. Heterotetramer of two MnmE and two MnmG subunits.</text>
</comment>
<comment type="subcellular location">
    <subcellularLocation>
        <location evidence="1">Cytoplasm</location>
    </subcellularLocation>
</comment>
<comment type="similarity">
    <text evidence="1">Belongs to the TRAFAC class TrmE-Era-EngA-EngB-Septin-like GTPase superfamily. TrmE GTPase family.</text>
</comment>
<sequence>MTSNDTIAAIATPPGRGGIGIVRISGTNLESLARGILGKLPDPRHAGLFSFLDQNSQIIDQGIALYFPSPHSYTGEEVLELQGHGGPAVMNLLLDRCLQLGARLAEPGEFTLRAFLNDKLDLAQAEGVADLIAASTANAARCAVRSLHGEFSSTIHQLVSALIDLRVLVEATLDFPEEEIDFLQSAHAAEQLATIRAKLEQVLVASRQGNLLQEGIKVVLAGQPNVGKSSLLNRLAGDEVAIVTDIPGTTRDTVRQSIEIEGIPLHLIDTAGLRETSDIVEQHGIARTYAAIEQADLVLLLVDSRHGVTEEDRSVLTRLPERLPVLTVHNKIDLSAQPPRLEENTSGPTIYLSAINGEGIELLRAALLKTAGWQANIAGEGAYMARQRHLQALIQAKELLERAAAWLHRADQLEILAEELRLAQQALSSITGEFTSDDLLGEIFSSFCIGK</sequence>
<proteinExistence type="inferred from homology"/>
<gene>
    <name evidence="1" type="primary">mnmE</name>
    <name evidence="1" type="synonym">trmE</name>
    <name type="ordered locus">NE0386</name>
</gene>
<name>MNME_NITEU</name>
<feature type="chain" id="PRO_0000188896" description="tRNA modification GTPase MnmE">
    <location>
        <begin position="1"/>
        <end position="451"/>
    </location>
</feature>
<feature type="domain" description="TrmE-type G">
    <location>
        <begin position="215"/>
        <end position="372"/>
    </location>
</feature>
<feature type="binding site" evidence="1">
    <location>
        <position position="23"/>
    </location>
    <ligand>
        <name>(6S)-5-formyl-5,6,7,8-tetrahydrofolate</name>
        <dbReference type="ChEBI" id="CHEBI:57457"/>
    </ligand>
</feature>
<feature type="binding site" evidence="1">
    <location>
        <position position="80"/>
    </location>
    <ligand>
        <name>(6S)-5-formyl-5,6,7,8-tetrahydrofolate</name>
        <dbReference type="ChEBI" id="CHEBI:57457"/>
    </ligand>
</feature>
<feature type="binding site" evidence="1">
    <location>
        <position position="119"/>
    </location>
    <ligand>
        <name>(6S)-5-formyl-5,6,7,8-tetrahydrofolate</name>
        <dbReference type="ChEBI" id="CHEBI:57457"/>
    </ligand>
</feature>
<feature type="binding site" evidence="1">
    <location>
        <begin position="225"/>
        <end position="230"/>
    </location>
    <ligand>
        <name>GTP</name>
        <dbReference type="ChEBI" id="CHEBI:37565"/>
    </ligand>
</feature>
<feature type="binding site" evidence="1">
    <location>
        <position position="225"/>
    </location>
    <ligand>
        <name>K(+)</name>
        <dbReference type="ChEBI" id="CHEBI:29103"/>
    </ligand>
</feature>
<feature type="binding site" evidence="1">
    <location>
        <position position="229"/>
    </location>
    <ligand>
        <name>Mg(2+)</name>
        <dbReference type="ChEBI" id="CHEBI:18420"/>
    </ligand>
</feature>
<feature type="binding site" evidence="1">
    <location>
        <begin position="244"/>
        <end position="250"/>
    </location>
    <ligand>
        <name>GTP</name>
        <dbReference type="ChEBI" id="CHEBI:37565"/>
    </ligand>
</feature>
<feature type="binding site" evidence="1">
    <location>
        <position position="244"/>
    </location>
    <ligand>
        <name>K(+)</name>
        <dbReference type="ChEBI" id="CHEBI:29103"/>
    </ligand>
</feature>
<feature type="binding site" evidence="1">
    <location>
        <position position="246"/>
    </location>
    <ligand>
        <name>K(+)</name>
        <dbReference type="ChEBI" id="CHEBI:29103"/>
    </ligand>
</feature>
<feature type="binding site" evidence="1">
    <location>
        <position position="249"/>
    </location>
    <ligand>
        <name>K(+)</name>
        <dbReference type="ChEBI" id="CHEBI:29103"/>
    </ligand>
</feature>
<feature type="binding site" evidence="1">
    <location>
        <position position="250"/>
    </location>
    <ligand>
        <name>Mg(2+)</name>
        <dbReference type="ChEBI" id="CHEBI:18420"/>
    </ligand>
</feature>
<feature type="binding site" evidence="1">
    <location>
        <begin position="269"/>
        <end position="272"/>
    </location>
    <ligand>
        <name>GTP</name>
        <dbReference type="ChEBI" id="CHEBI:37565"/>
    </ligand>
</feature>
<feature type="binding site" evidence="1">
    <location>
        <position position="451"/>
    </location>
    <ligand>
        <name>(6S)-5-formyl-5,6,7,8-tetrahydrofolate</name>
        <dbReference type="ChEBI" id="CHEBI:57457"/>
    </ligand>
</feature>